<name>PLSX_THEP1</name>
<feature type="chain" id="PRO_0000329276" description="Phosphate acyltransferase">
    <location>
        <begin position="1"/>
        <end position="334"/>
    </location>
</feature>
<protein>
    <recommendedName>
        <fullName evidence="1">Phosphate acyltransferase</fullName>
        <ecNumber evidence="1">2.3.1.274</ecNumber>
    </recommendedName>
    <alternativeName>
        <fullName evidence="1">Acyl-ACP phosphotransacylase</fullName>
    </alternativeName>
    <alternativeName>
        <fullName evidence="1">Acyl-[acyl-carrier-protein]--phosphate acyltransferase</fullName>
    </alternativeName>
    <alternativeName>
        <fullName evidence="1">Phosphate-acyl-ACP acyltransferase</fullName>
    </alternativeName>
</protein>
<comment type="function">
    <text evidence="1">Catalyzes the reversible formation of acyl-phosphate (acyl-PO(4)) from acyl-[acyl-carrier-protein] (acyl-ACP). This enzyme utilizes acyl-ACP as fatty acyl donor, but not acyl-CoA.</text>
</comment>
<comment type="catalytic activity">
    <reaction evidence="1">
        <text>a fatty acyl-[ACP] + phosphate = an acyl phosphate + holo-[ACP]</text>
        <dbReference type="Rhea" id="RHEA:42292"/>
        <dbReference type="Rhea" id="RHEA-COMP:9685"/>
        <dbReference type="Rhea" id="RHEA-COMP:14125"/>
        <dbReference type="ChEBI" id="CHEBI:43474"/>
        <dbReference type="ChEBI" id="CHEBI:59918"/>
        <dbReference type="ChEBI" id="CHEBI:64479"/>
        <dbReference type="ChEBI" id="CHEBI:138651"/>
        <dbReference type="EC" id="2.3.1.274"/>
    </reaction>
</comment>
<comment type="pathway">
    <text evidence="1">Lipid metabolism; phospholipid metabolism.</text>
</comment>
<comment type="subunit">
    <text evidence="1">Homodimer. Probably interacts with PlsY.</text>
</comment>
<comment type="subcellular location">
    <subcellularLocation>
        <location evidence="1">Cytoplasm</location>
    </subcellularLocation>
    <text evidence="1">Associated with the membrane possibly through PlsY.</text>
</comment>
<comment type="similarity">
    <text evidence="1">Belongs to the PlsX family.</text>
</comment>
<evidence type="ECO:0000255" key="1">
    <source>
        <dbReference type="HAMAP-Rule" id="MF_00019"/>
    </source>
</evidence>
<gene>
    <name evidence="1" type="primary">plsX</name>
    <name type="ordered locus">Tpet_0776</name>
</gene>
<sequence>MRYRSDRVKIAIDVMGGDRAPDEILKGALLASKEVEGEIVLIGPEEIVRNKGLPFVSAFEIVKMDDPPLEVLRKKNSSMHVGLKLLSEGKVDAFVSAGATGPLFLGATSIVGKLEGIERPALGVAVPSLKGATVLIDAGANAKVRPEHLVDFAFMGIAYSKVLGAENPRVGLLNMGSEENKGPDDIKRAYQLLKEFLGDTFFGNIEGHDINLGTVDVVVADGFSGNVALKTMEGTAKLVTSVLKESIKDGGFLSLLGALLMKRSFDKMKEKLDPRSYGGTFILGVKGIVVKAHGSSDAKAIKHAIKVAEKGIRMNIVQEIERGISHVRNSGDGR</sequence>
<reference key="1">
    <citation type="submission" date="2007-05" db="EMBL/GenBank/DDBJ databases">
        <title>Complete sequence of Thermotoga petrophila RKU-1.</title>
        <authorList>
            <consortium name="US DOE Joint Genome Institute"/>
            <person name="Copeland A."/>
            <person name="Lucas S."/>
            <person name="Lapidus A."/>
            <person name="Barry K."/>
            <person name="Glavina del Rio T."/>
            <person name="Dalin E."/>
            <person name="Tice H."/>
            <person name="Pitluck S."/>
            <person name="Sims D."/>
            <person name="Brettin T."/>
            <person name="Bruce D."/>
            <person name="Detter J.C."/>
            <person name="Han C."/>
            <person name="Tapia R."/>
            <person name="Schmutz J."/>
            <person name="Larimer F."/>
            <person name="Land M."/>
            <person name="Hauser L."/>
            <person name="Kyrpides N."/>
            <person name="Mikhailova N."/>
            <person name="Nelson K."/>
            <person name="Gogarten J.P."/>
            <person name="Noll K."/>
            <person name="Richardson P."/>
        </authorList>
    </citation>
    <scope>NUCLEOTIDE SEQUENCE [LARGE SCALE GENOMIC DNA]</scope>
    <source>
        <strain>ATCC BAA-488 / DSM 13995 / JCM 10881 / RKU-1</strain>
    </source>
</reference>
<organism>
    <name type="scientific">Thermotoga petrophila (strain ATCC BAA-488 / DSM 13995 / JCM 10881 / RKU-1)</name>
    <dbReference type="NCBI Taxonomy" id="390874"/>
    <lineage>
        <taxon>Bacteria</taxon>
        <taxon>Thermotogati</taxon>
        <taxon>Thermotogota</taxon>
        <taxon>Thermotogae</taxon>
        <taxon>Thermotogales</taxon>
        <taxon>Thermotogaceae</taxon>
        <taxon>Thermotoga</taxon>
    </lineage>
</organism>
<dbReference type="EC" id="2.3.1.274" evidence="1"/>
<dbReference type="EMBL" id="CP000702">
    <property type="protein sequence ID" value="ABQ46795.1"/>
    <property type="molecule type" value="Genomic_DNA"/>
</dbReference>
<dbReference type="SMR" id="A5IKS2"/>
<dbReference type="STRING" id="390874.Tpet_0776"/>
<dbReference type="KEGG" id="tpt:Tpet_0776"/>
<dbReference type="eggNOG" id="COG0416">
    <property type="taxonomic scope" value="Bacteria"/>
</dbReference>
<dbReference type="HOGENOM" id="CLU_039379_1_1_0"/>
<dbReference type="UniPathway" id="UPA00085"/>
<dbReference type="Proteomes" id="UP000006558">
    <property type="component" value="Chromosome"/>
</dbReference>
<dbReference type="GO" id="GO:0005737">
    <property type="term" value="C:cytoplasm"/>
    <property type="evidence" value="ECO:0007669"/>
    <property type="project" value="UniProtKB-SubCell"/>
</dbReference>
<dbReference type="GO" id="GO:0043811">
    <property type="term" value="F:phosphate:acyl-[acyl carrier protein] acyltransferase activity"/>
    <property type="evidence" value="ECO:0007669"/>
    <property type="project" value="UniProtKB-UniRule"/>
</dbReference>
<dbReference type="GO" id="GO:0006633">
    <property type="term" value="P:fatty acid biosynthetic process"/>
    <property type="evidence" value="ECO:0007669"/>
    <property type="project" value="UniProtKB-UniRule"/>
</dbReference>
<dbReference type="GO" id="GO:0008654">
    <property type="term" value="P:phospholipid biosynthetic process"/>
    <property type="evidence" value="ECO:0007669"/>
    <property type="project" value="UniProtKB-KW"/>
</dbReference>
<dbReference type="Gene3D" id="3.40.718.10">
    <property type="entry name" value="Isopropylmalate Dehydrogenase"/>
    <property type="match status" value="1"/>
</dbReference>
<dbReference type="HAMAP" id="MF_00019">
    <property type="entry name" value="PlsX"/>
    <property type="match status" value="1"/>
</dbReference>
<dbReference type="InterPro" id="IPR003664">
    <property type="entry name" value="FA_synthesis"/>
</dbReference>
<dbReference type="InterPro" id="IPR012281">
    <property type="entry name" value="Phospholipid_synth_PlsX-like"/>
</dbReference>
<dbReference type="NCBIfam" id="TIGR00182">
    <property type="entry name" value="plsX"/>
    <property type="match status" value="1"/>
</dbReference>
<dbReference type="PANTHER" id="PTHR30100">
    <property type="entry name" value="FATTY ACID/PHOSPHOLIPID SYNTHESIS PROTEIN PLSX"/>
    <property type="match status" value="1"/>
</dbReference>
<dbReference type="PANTHER" id="PTHR30100:SF1">
    <property type="entry name" value="PHOSPHATE ACYLTRANSFERASE"/>
    <property type="match status" value="1"/>
</dbReference>
<dbReference type="Pfam" id="PF02504">
    <property type="entry name" value="FA_synthesis"/>
    <property type="match status" value="1"/>
</dbReference>
<dbReference type="PIRSF" id="PIRSF002465">
    <property type="entry name" value="Phsphlp_syn_PlsX"/>
    <property type="match status" value="1"/>
</dbReference>
<dbReference type="SUPFAM" id="SSF53659">
    <property type="entry name" value="Isocitrate/Isopropylmalate dehydrogenase-like"/>
    <property type="match status" value="1"/>
</dbReference>
<accession>A5IKS2</accession>
<proteinExistence type="inferred from homology"/>
<keyword id="KW-0963">Cytoplasm</keyword>
<keyword id="KW-0444">Lipid biosynthesis</keyword>
<keyword id="KW-0443">Lipid metabolism</keyword>
<keyword id="KW-0594">Phospholipid biosynthesis</keyword>
<keyword id="KW-1208">Phospholipid metabolism</keyword>
<keyword id="KW-0808">Transferase</keyword>